<sequence length="229" mass="26106">MKQLIHNDWWEVLKPQFESAYYAQLHNFLKEEYTHQTIYPEMHHIFEAFEWTPFSKVKVVILGQDPYHGPNQAHGCSFSVLPGVPVPPSLQNIYKELQSDLGCTPVNHGYLKKWADQGVLLLNSVLTVRAGQAYSHRGHGWEQLTDAAIHALSERPKPVVFILWGRAARNKKQLINTKTNIVLESAHPSPLSANRGFFGSRPFSKTNEALQAMGEQPIDWQLPAEPNYR</sequence>
<name>UNG_LIMRJ</name>
<organism>
    <name type="scientific">Limosilactobacillus reuteri subsp. reuteri (strain JCM 1112)</name>
    <name type="common">Lactobacillus reuteri</name>
    <dbReference type="NCBI Taxonomy" id="557433"/>
    <lineage>
        <taxon>Bacteria</taxon>
        <taxon>Bacillati</taxon>
        <taxon>Bacillota</taxon>
        <taxon>Bacilli</taxon>
        <taxon>Lactobacillales</taxon>
        <taxon>Lactobacillaceae</taxon>
        <taxon>Limosilactobacillus</taxon>
    </lineage>
</organism>
<gene>
    <name evidence="1" type="primary">ung</name>
    <name type="ordered locus">LAR_0392</name>
</gene>
<accession>B2G626</accession>
<keyword id="KW-0963">Cytoplasm</keyword>
<keyword id="KW-0227">DNA damage</keyword>
<keyword id="KW-0234">DNA repair</keyword>
<keyword id="KW-0378">Hydrolase</keyword>
<proteinExistence type="inferred from homology"/>
<protein>
    <recommendedName>
        <fullName evidence="1">Uracil-DNA glycosylase</fullName>
        <shortName evidence="1">UDG</shortName>
        <ecNumber evidence="1">3.2.2.27</ecNumber>
    </recommendedName>
</protein>
<dbReference type="EC" id="3.2.2.27" evidence="1"/>
<dbReference type="EMBL" id="AP007281">
    <property type="protein sequence ID" value="BAG24908.1"/>
    <property type="molecule type" value="Genomic_DNA"/>
</dbReference>
<dbReference type="RefSeq" id="WP_003676241.1">
    <property type="nucleotide sequence ID" value="NC_010609.1"/>
</dbReference>
<dbReference type="SMR" id="B2G626"/>
<dbReference type="KEGG" id="lrf:LAR_0392"/>
<dbReference type="HOGENOM" id="CLU_032162_3_0_9"/>
<dbReference type="GO" id="GO:0005737">
    <property type="term" value="C:cytoplasm"/>
    <property type="evidence" value="ECO:0007669"/>
    <property type="project" value="UniProtKB-SubCell"/>
</dbReference>
<dbReference type="GO" id="GO:0004844">
    <property type="term" value="F:uracil DNA N-glycosylase activity"/>
    <property type="evidence" value="ECO:0007669"/>
    <property type="project" value="UniProtKB-UniRule"/>
</dbReference>
<dbReference type="GO" id="GO:0097510">
    <property type="term" value="P:base-excision repair, AP site formation via deaminated base removal"/>
    <property type="evidence" value="ECO:0007669"/>
    <property type="project" value="TreeGrafter"/>
</dbReference>
<dbReference type="CDD" id="cd10027">
    <property type="entry name" value="UDG-F1-like"/>
    <property type="match status" value="1"/>
</dbReference>
<dbReference type="FunFam" id="3.40.470.10:FF:000001">
    <property type="entry name" value="Uracil-DNA glycosylase"/>
    <property type="match status" value="1"/>
</dbReference>
<dbReference type="Gene3D" id="3.40.470.10">
    <property type="entry name" value="Uracil-DNA glycosylase-like domain"/>
    <property type="match status" value="1"/>
</dbReference>
<dbReference type="HAMAP" id="MF_00148">
    <property type="entry name" value="UDG"/>
    <property type="match status" value="1"/>
</dbReference>
<dbReference type="InterPro" id="IPR002043">
    <property type="entry name" value="UDG_fam1"/>
</dbReference>
<dbReference type="InterPro" id="IPR018085">
    <property type="entry name" value="Ura-DNA_Glyclase_AS"/>
</dbReference>
<dbReference type="InterPro" id="IPR005122">
    <property type="entry name" value="Uracil-DNA_glycosylase-like"/>
</dbReference>
<dbReference type="InterPro" id="IPR036895">
    <property type="entry name" value="Uracil-DNA_glycosylase-like_sf"/>
</dbReference>
<dbReference type="NCBIfam" id="NF003588">
    <property type="entry name" value="PRK05254.1-1"/>
    <property type="match status" value="1"/>
</dbReference>
<dbReference type="NCBIfam" id="NF003589">
    <property type="entry name" value="PRK05254.1-2"/>
    <property type="match status" value="1"/>
</dbReference>
<dbReference type="NCBIfam" id="NF003591">
    <property type="entry name" value="PRK05254.1-4"/>
    <property type="match status" value="1"/>
</dbReference>
<dbReference type="NCBIfam" id="NF003592">
    <property type="entry name" value="PRK05254.1-5"/>
    <property type="match status" value="1"/>
</dbReference>
<dbReference type="NCBIfam" id="TIGR00628">
    <property type="entry name" value="ung"/>
    <property type="match status" value="1"/>
</dbReference>
<dbReference type="PANTHER" id="PTHR11264">
    <property type="entry name" value="URACIL-DNA GLYCOSYLASE"/>
    <property type="match status" value="1"/>
</dbReference>
<dbReference type="PANTHER" id="PTHR11264:SF0">
    <property type="entry name" value="URACIL-DNA GLYCOSYLASE"/>
    <property type="match status" value="1"/>
</dbReference>
<dbReference type="Pfam" id="PF03167">
    <property type="entry name" value="UDG"/>
    <property type="match status" value="1"/>
</dbReference>
<dbReference type="SMART" id="SM00986">
    <property type="entry name" value="UDG"/>
    <property type="match status" value="1"/>
</dbReference>
<dbReference type="SMART" id="SM00987">
    <property type="entry name" value="UreE_C"/>
    <property type="match status" value="1"/>
</dbReference>
<dbReference type="SUPFAM" id="SSF52141">
    <property type="entry name" value="Uracil-DNA glycosylase-like"/>
    <property type="match status" value="1"/>
</dbReference>
<dbReference type="PROSITE" id="PS00130">
    <property type="entry name" value="U_DNA_GLYCOSYLASE"/>
    <property type="match status" value="1"/>
</dbReference>
<comment type="function">
    <text evidence="1">Excises uracil residues from the DNA which can arise as a result of misincorporation of dUMP residues by DNA polymerase or due to deamination of cytosine.</text>
</comment>
<comment type="catalytic activity">
    <reaction evidence="1">
        <text>Hydrolyzes single-stranded DNA or mismatched double-stranded DNA and polynucleotides, releasing free uracil.</text>
        <dbReference type="EC" id="3.2.2.27"/>
    </reaction>
</comment>
<comment type="subcellular location">
    <subcellularLocation>
        <location evidence="1">Cytoplasm</location>
    </subcellularLocation>
</comment>
<comment type="similarity">
    <text evidence="1">Belongs to the uracil-DNA glycosylase (UDG) superfamily. UNG family.</text>
</comment>
<evidence type="ECO:0000255" key="1">
    <source>
        <dbReference type="HAMAP-Rule" id="MF_00148"/>
    </source>
</evidence>
<feature type="chain" id="PRO_1000096590" description="Uracil-DNA glycosylase">
    <location>
        <begin position="1"/>
        <end position="229"/>
    </location>
</feature>
<feature type="active site" description="Proton acceptor" evidence="1">
    <location>
        <position position="65"/>
    </location>
</feature>
<reference key="1">
    <citation type="journal article" date="2008" name="DNA Res.">
        <title>Comparative genome analysis of Lactobacillus reuteri and Lactobacillus fermentum reveal a genomic island for reuterin and cobalamin production.</title>
        <authorList>
            <person name="Morita H."/>
            <person name="Toh H."/>
            <person name="Fukuda S."/>
            <person name="Horikawa H."/>
            <person name="Oshima K."/>
            <person name="Suzuki T."/>
            <person name="Murakami M."/>
            <person name="Hisamatsu S."/>
            <person name="Kato Y."/>
            <person name="Takizawa T."/>
            <person name="Fukuoka H."/>
            <person name="Yoshimura T."/>
            <person name="Itoh K."/>
            <person name="O'Sullivan D.J."/>
            <person name="McKay L.L."/>
            <person name="Ohno H."/>
            <person name="Kikuchi J."/>
            <person name="Masaoka T."/>
            <person name="Hattori M."/>
        </authorList>
    </citation>
    <scope>NUCLEOTIDE SEQUENCE [LARGE SCALE GENOMIC DNA]</scope>
    <source>
        <strain>JCM 1112</strain>
    </source>
</reference>